<keyword id="KW-0068">Autocatalytic cleavage</keyword>
<keyword id="KW-0963">Cytoplasm</keyword>
<keyword id="KW-0210">Decarboxylase</keyword>
<keyword id="KW-0456">Lyase</keyword>
<keyword id="KW-0566">Pantothenate biosynthesis</keyword>
<keyword id="KW-0670">Pyruvate</keyword>
<keyword id="KW-0704">Schiff base</keyword>
<keyword id="KW-0865">Zymogen</keyword>
<sequence>MFRTMMKSKIHRATVTHADLHYVGSVTVDQDLMDAADLLEGEQVCIVDIDNGARLETYVIAGERGSGVIGINGAAAHLVKPGDLVILIAYGVMNEQEVRDYEPRVVFVDAANSPIELGADPAHAPEGSGLITPRMLSTLDAERESSLV</sequence>
<dbReference type="EC" id="4.1.1.11" evidence="1"/>
<dbReference type="EMBL" id="CP000431">
    <property type="protein sequence ID" value="ABG96202.1"/>
    <property type="molecule type" value="Genomic_DNA"/>
</dbReference>
<dbReference type="RefSeq" id="WP_005262154.1">
    <property type="nucleotide sequence ID" value="NC_008268.1"/>
</dbReference>
<dbReference type="SMR" id="Q0S8D4"/>
<dbReference type="GeneID" id="69888683"/>
<dbReference type="KEGG" id="rha:RHA1_ro04416"/>
<dbReference type="eggNOG" id="COG0853">
    <property type="taxonomic scope" value="Bacteria"/>
</dbReference>
<dbReference type="HOGENOM" id="CLU_115305_2_0_11"/>
<dbReference type="OrthoDB" id="9803983at2"/>
<dbReference type="UniPathway" id="UPA00028">
    <property type="reaction ID" value="UER00002"/>
</dbReference>
<dbReference type="Proteomes" id="UP000008710">
    <property type="component" value="Chromosome"/>
</dbReference>
<dbReference type="GO" id="GO:0005829">
    <property type="term" value="C:cytosol"/>
    <property type="evidence" value="ECO:0007669"/>
    <property type="project" value="TreeGrafter"/>
</dbReference>
<dbReference type="GO" id="GO:0004068">
    <property type="term" value="F:aspartate 1-decarboxylase activity"/>
    <property type="evidence" value="ECO:0007669"/>
    <property type="project" value="UniProtKB-UniRule"/>
</dbReference>
<dbReference type="GO" id="GO:0006523">
    <property type="term" value="P:alanine biosynthetic process"/>
    <property type="evidence" value="ECO:0007669"/>
    <property type="project" value="InterPro"/>
</dbReference>
<dbReference type="GO" id="GO:0015940">
    <property type="term" value="P:pantothenate biosynthetic process"/>
    <property type="evidence" value="ECO:0007669"/>
    <property type="project" value="UniProtKB-UniRule"/>
</dbReference>
<dbReference type="CDD" id="cd06919">
    <property type="entry name" value="Asp_decarbox"/>
    <property type="match status" value="1"/>
</dbReference>
<dbReference type="Gene3D" id="2.40.40.20">
    <property type="match status" value="1"/>
</dbReference>
<dbReference type="HAMAP" id="MF_00446">
    <property type="entry name" value="PanD"/>
    <property type="match status" value="1"/>
</dbReference>
<dbReference type="InterPro" id="IPR009010">
    <property type="entry name" value="Asp_de-COase-like_dom_sf"/>
</dbReference>
<dbReference type="InterPro" id="IPR003190">
    <property type="entry name" value="Asp_decarbox"/>
</dbReference>
<dbReference type="NCBIfam" id="TIGR00223">
    <property type="entry name" value="panD"/>
    <property type="match status" value="1"/>
</dbReference>
<dbReference type="PANTHER" id="PTHR21012">
    <property type="entry name" value="ASPARTATE 1-DECARBOXYLASE"/>
    <property type="match status" value="1"/>
</dbReference>
<dbReference type="PANTHER" id="PTHR21012:SF0">
    <property type="entry name" value="ASPARTATE 1-DECARBOXYLASE"/>
    <property type="match status" value="1"/>
</dbReference>
<dbReference type="Pfam" id="PF02261">
    <property type="entry name" value="Asp_decarbox"/>
    <property type="match status" value="1"/>
</dbReference>
<dbReference type="PIRSF" id="PIRSF006246">
    <property type="entry name" value="Asp_decarbox"/>
    <property type="match status" value="1"/>
</dbReference>
<dbReference type="SUPFAM" id="SSF50692">
    <property type="entry name" value="ADC-like"/>
    <property type="match status" value="1"/>
</dbReference>
<reference key="1">
    <citation type="journal article" date="2006" name="Proc. Natl. Acad. Sci. U.S.A.">
        <title>The complete genome of Rhodococcus sp. RHA1 provides insights into a catabolic powerhouse.</title>
        <authorList>
            <person name="McLeod M.P."/>
            <person name="Warren R.L."/>
            <person name="Hsiao W.W.L."/>
            <person name="Araki N."/>
            <person name="Myhre M."/>
            <person name="Fernandes C."/>
            <person name="Miyazawa D."/>
            <person name="Wong W."/>
            <person name="Lillquist A.L."/>
            <person name="Wang D."/>
            <person name="Dosanjh M."/>
            <person name="Hara H."/>
            <person name="Petrescu A."/>
            <person name="Morin R.D."/>
            <person name="Yang G."/>
            <person name="Stott J.M."/>
            <person name="Schein J.E."/>
            <person name="Shin H."/>
            <person name="Smailus D."/>
            <person name="Siddiqui A.S."/>
            <person name="Marra M.A."/>
            <person name="Jones S.J.M."/>
            <person name="Holt R."/>
            <person name="Brinkman F.S.L."/>
            <person name="Miyauchi K."/>
            <person name="Fukuda M."/>
            <person name="Davies J.E."/>
            <person name="Mohn W.W."/>
            <person name="Eltis L.D."/>
        </authorList>
    </citation>
    <scope>NUCLEOTIDE SEQUENCE [LARGE SCALE GENOMIC DNA]</scope>
    <source>
        <strain>RHA1</strain>
    </source>
</reference>
<proteinExistence type="inferred from homology"/>
<protein>
    <recommendedName>
        <fullName evidence="1">Aspartate 1-decarboxylase</fullName>
        <ecNumber evidence="1">4.1.1.11</ecNumber>
    </recommendedName>
    <alternativeName>
        <fullName evidence="1">Aspartate alpha-decarboxylase</fullName>
    </alternativeName>
    <component>
        <recommendedName>
            <fullName evidence="1">Aspartate 1-decarboxylase beta chain</fullName>
        </recommendedName>
    </component>
    <component>
        <recommendedName>
            <fullName evidence="1">Aspartate 1-decarboxylase alpha chain</fullName>
        </recommendedName>
    </component>
</protein>
<gene>
    <name evidence="1" type="primary">panD</name>
    <name type="ordered locus">RHA1_ro04416</name>
</gene>
<accession>Q0S8D4</accession>
<comment type="function">
    <text evidence="1">Catalyzes the pyruvoyl-dependent decarboxylation of aspartate to produce beta-alanine.</text>
</comment>
<comment type="catalytic activity">
    <reaction evidence="1">
        <text>L-aspartate + H(+) = beta-alanine + CO2</text>
        <dbReference type="Rhea" id="RHEA:19497"/>
        <dbReference type="ChEBI" id="CHEBI:15378"/>
        <dbReference type="ChEBI" id="CHEBI:16526"/>
        <dbReference type="ChEBI" id="CHEBI:29991"/>
        <dbReference type="ChEBI" id="CHEBI:57966"/>
        <dbReference type="EC" id="4.1.1.11"/>
    </reaction>
</comment>
<comment type="cofactor">
    <cofactor evidence="1">
        <name>pyruvate</name>
        <dbReference type="ChEBI" id="CHEBI:15361"/>
    </cofactor>
    <text evidence="1">Binds 1 pyruvoyl group covalently per subunit.</text>
</comment>
<comment type="pathway">
    <text evidence="1">Cofactor biosynthesis; (R)-pantothenate biosynthesis; beta-alanine from L-aspartate: step 1/1.</text>
</comment>
<comment type="subunit">
    <text evidence="1">Heterooctamer of four alpha and four beta subunits.</text>
</comment>
<comment type="subcellular location">
    <subcellularLocation>
        <location evidence="1">Cytoplasm</location>
    </subcellularLocation>
</comment>
<comment type="PTM">
    <text evidence="1">Is synthesized initially as an inactive proenzyme, which is activated by self-cleavage at a specific serine bond to produce a beta-subunit with a hydroxyl group at its C-terminus and an alpha-subunit with a pyruvoyl group at its N-terminus.</text>
</comment>
<comment type="similarity">
    <text evidence="1">Belongs to the PanD family.</text>
</comment>
<organism>
    <name type="scientific">Rhodococcus jostii (strain RHA1)</name>
    <dbReference type="NCBI Taxonomy" id="101510"/>
    <lineage>
        <taxon>Bacteria</taxon>
        <taxon>Bacillati</taxon>
        <taxon>Actinomycetota</taxon>
        <taxon>Actinomycetes</taxon>
        <taxon>Mycobacteriales</taxon>
        <taxon>Nocardiaceae</taxon>
        <taxon>Rhodococcus</taxon>
    </lineage>
</organism>
<evidence type="ECO:0000255" key="1">
    <source>
        <dbReference type="HAMAP-Rule" id="MF_00446"/>
    </source>
</evidence>
<name>PAND_RHOJR</name>
<feature type="chain" id="PRO_0000307059" description="Aspartate 1-decarboxylase beta chain" evidence="1">
    <location>
        <begin position="1"/>
        <end position="24"/>
    </location>
</feature>
<feature type="chain" id="PRO_0000307060" description="Aspartate 1-decarboxylase alpha chain" evidence="1">
    <location>
        <begin position="25"/>
        <end position="148"/>
    </location>
</feature>
<feature type="active site" description="Schiff-base intermediate with substrate; via pyruvic acid" evidence="1">
    <location>
        <position position="25"/>
    </location>
</feature>
<feature type="active site" description="Proton donor" evidence="1">
    <location>
        <position position="58"/>
    </location>
</feature>
<feature type="binding site" evidence="1">
    <location>
        <position position="57"/>
    </location>
    <ligand>
        <name>substrate</name>
    </ligand>
</feature>
<feature type="binding site" evidence="1">
    <location>
        <begin position="73"/>
        <end position="75"/>
    </location>
    <ligand>
        <name>substrate</name>
    </ligand>
</feature>
<feature type="modified residue" description="Pyruvic acid (Ser)" evidence="1">
    <location>
        <position position="25"/>
    </location>
</feature>